<feature type="chain" id="PRO_1000086102" description="Small ribosomal subunit protein uS3">
    <location>
        <begin position="1"/>
        <end position="249"/>
    </location>
</feature>
<feature type="domain" description="KH type-2" evidence="1">
    <location>
        <begin position="39"/>
        <end position="107"/>
    </location>
</feature>
<feature type="region of interest" description="Disordered" evidence="2">
    <location>
        <begin position="215"/>
        <end position="249"/>
    </location>
</feature>
<feature type="compositionally biased region" description="Basic and acidic residues" evidence="2">
    <location>
        <begin position="230"/>
        <end position="249"/>
    </location>
</feature>
<protein>
    <recommendedName>
        <fullName evidence="1">Small ribosomal subunit protein uS3</fullName>
    </recommendedName>
    <alternativeName>
        <fullName evidence="3">30S ribosomal protein S3</fullName>
    </alternativeName>
</protein>
<accession>B0T2C8</accession>
<name>RS3_CAUSK</name>
<sequence length="249" mass="27988">MGQKVNPVGLRLGINRTWDSRWFADGEQYGKLLHQDLAVRAMLKKRLYQAGVSRIIIERPHKKCRVTIYAARPGVIIGKKGADIDKLRKDLSVMTEGEVHLNIVEIRKPETDAQLVAESIAQQLERRIAFRRAMKRSIQSAVRLGAKGIRINVSGRLGGAEIARMEWYREGRVPLHTLRADIDYGFAEAKTTYGIIGVKTWIFKGEVLEHDPMALDKRLATESGPAGEGGGRERGDRPDRGDRGRRDRG</sequence>
<evidence type="ECO:0000255" key="1">
    <source>
        <dbReference type="HAMAP-Rule" id="MF_01309"/>
    </source>
</evidence>
<evidence type="ECO:0000256" key="2">
    <source>
        <dbReference type="SAM" id="MobiDB-lite"/>
    </source>
</evidence>
<evidence type="ECO:0000305" key="3"/>
<dbReference type="EMBL" id="CP000927">
    <property type="protein sequence ID" value="ABZ70749.1"/>
    <property type="molecule type" value="Genomic_DNA"/>
</dbReference>
<dbReference type="SMR" id="B0T2C8"/>
<dbReference type="STRING" id="366602.Caul_1620"/>
<dbReference type="KEGG" id="cak:Caul_1620"/>
<dbReference type="eggNOG" id="COG0092">
    <property type="taxonomic scope" value="Bacteria"/>
</dbReference>
<dbReference type="HOGENOM" id="CLU_058591_0_2_5"/>
<dbReference type="OrthoDB" id="9806396at2"/>
<dbReference type="GO" id="GO:0022627">
    <property type="term" value="C:cytosolic small ribosomal subunit"/>
    <property type="evidence" value="ECO:0007669"/>
    <property type="project" value="TreeGrafter"/>
</dbReference>
<dbReference type="GO" id="GO:0003729">
    <property type="term" value="F:mRNA binding"/>
    <property type="evidence" value="ECO:0007669"/>
    <property type="project" value="UniProtKB-UniRule"/>
</dbReference>
<dbReference type="GO" id="GO:0019843">
    <property type="term" value="F:rRNA binding"/>
    <property type="evidence" value="ECO:0007669"/>
    <property type="project" value="UniProtKB-UniRule"/>
</dbReference>
<dbReference type="GO" id="GO:0003735">
    <property type="term" value="F:structural constituent of ribosome"/>
    <property type="evidence" value="ECO:0007669"/>
    <property type="project" value="InterPro"/>
</dbReference>
<dbReference type="GO" id="GO:0006412">
    <property type="term" value="P:translation"/>
    <property type="evidence" value="ECO:0007669"/>
    <property type="project" value="UniProtKB-UniRule"/>
</dbReference>
<dbReference type="CDD" id="cd02412">
    <property type="entry name" value="KH-II_30S_S3"/>
    <property type="match status" value="1"/>
</dbReference>
<dbReference type="FunFam" id="3.30.1140.32:FF:000001">
    <property type="entry name" value="30S ribosomal protein S3"/>
    <property type="match status" value="1"/>
</dbReference>
<dbReference type="FunFam" id="3.30.300.20:FF:000001">
    <property type="entry name" value="30S ribosomal protein S3"/>
    <property type="match status" value="1"/>
</dbReference>
<dbReference type="Gene3D" id="3.30.300.20">
    <property type="match status" value="1"/>
</dbReference>
<dbReference type="Gene3D" id="3.30.1140.32">
    <property type="entry name" value="Ribosomal protein S3, C-terminal domain"/>
    <property type="match status" value="1"/>
</dbReference>
<dbReference type="HAMAP" id="MF_01309_B">
    <property type="entry name" value="Ribosomal_uS3_B"/>
    <property type="match status" value="1"/>
</dbReference>
<dbReference type="InterPro" id="IPR004087">
    <property type="entry name" value="KH_dom"/>
</dbReference>
<dbReference type="InterPro" id="IPR015946">
    <property type="entry name" value="KH_dom-like_a/b"/>
</dbReference>
<dbReference type="InterPro" id="IPR004044">
    <property type="entry name" value="KH_dom_type_2"/>
</dbReference>
<dbReference type="InterPro" id="IPR009019">
    <property type="entry name" value="KH_sf_prok-type"/>
</dbReference>
<dbReference type="InterPro" id="IPR036419">
    <property type="entry name" value="Ribosomal_S3_C_sf"/>
</dbReference>
<dbReference type="InterPro" id="IPR005704">
    <property type="entry name" value="Ribosomal_uS3_bac-typ"/>
</dbReference>
<dbReference type="InterPro" id="IPR001351">
    <property type="entry name" value="Ribosomal_uS3_C"/>
</dbReference>
<dbReference type="InterPro" id="IPR018280">
    <property type="entry name" value="Ribosomal_uS3_CS"/>
</dbReference>
<dbReference type="NCBIfam" id="TIGR01009">
    <property type="entry name" value="rpsC_bact"/>
    <property type="match status" value="1"/>
</dbReference>
<dbReference type="PANTHER" id="PTHR11760">
    <property type="entry name" value="30S/40S RIBOSOMAL PROTEIN S3"/>
    <property type="match status" value="1"/>
</dbReference>
<dbReference type="PANTHER" id="PTHR11760:SF19">
    <property type="entry name" value="SMALL RIBOSOMAL SUBUNIT PROTEIN US3C"/>
    <property type="match status" value="1"/>
</dbReference>
<dbReference type="Pfam" id="PF07650">
    <property type="entry name" value="KH_2"/>
    <property type="match status" value="1"/>
</dbReference>
<dbReference type="Pfam" id="PF00189">
    <property type="entry name" value="Ribosomal_S3_C"/>
    <property type="match status" value="1"/>
</dbReference>
<dbReference type="SMART" id="SM00322">
    <property type="entry name" value="KH"/>
    <property type="match status" value="1"/>
</dbReference>
<dbReference type="SUPFAM" id="SSF54814">
    <property type="entry name" value="Prokaryotic type KH domain (KH-domain type II)"/>
    <property type="match status" value="1"/>
</dbReference>
<dbReference type="SUPFAM" id="SSF54821">
    <property type="entry name" value="Ribosomal protein S3 C-terminal domain"/>
    <property type="match status" value="1"/>
</dbReference>
<dbReference type="PROSITE" id="PS50823">
    <property type="entry name" value="KH_TYPE_2"/>
    <property type="match status" value="1"/>
</dbReference>
<dbReference type="PROSITE" id="PS00548">
    <property type="entry name" value="RIBOSOMAL_S3"/>
    <property type="match status" value="1"/>
</dbReference>
<keyword id="KW-0687">Ribonucleoprotein</keyword>
<keyword id="KW-0689">Ribosomal protein</keyword>
<keyword id="KW-0694">RNA-binding</keyword>
<keyword id="KW-0699">rRNA-binding</keyword>
<organism>
    <name type="scientific">Caulobacter sp. (strain K31)</name>
    <dbReference type="NCBI Taxonomy" id="366602"/>
    <lineage>
        <taxon>Bacteria</taxon>
        <taxon>Pseudomonadati</taxon>
        <taxon>Pseudomonadota</taxon>
        <taxon>Alphaproteobacteria</taxon>
        <taxon>Caulobacterales</taxon>
        <taxon>Caulobacteraceae</taxon>
        <taxon>Caulobacter</taxon>
    </lineage>
</organism>
<comment type="function">
    <text evidence="1">Binds the lower part of the 30S subunit head. Binds mRNA in the 70S ribosome, positioning it for translation.</text>
</comment>
<comment type="subunit">
    <text evidence="1">Part of the 30S ribosomal subunit. Forms a tight complex with proteins S10 and S14.</text>
</comment>
<comment type="similarity">
    <text evidence="1">Belongs to the universal ribosomal protein uS3 family.</text>
</comment>
<proteinExistence type="inferred from homology"/>
<reference key="1">
    <citation type="submission" date="2008-01" db="EMBL/GenBank/DDBJ databases">
        <title>Complete sequence of chromosome of Caulobacter sp. K31.</title>
        <authorList>
            <consortium name="US DOE Joint Genome Institute"/>
            <person name="Copeland A."/>
            <person name="Lucas S."/>
            <person name="Lapidus A."/>
            <person name="Barry K."/>
            <person name="Glavina del Rio T."/>
            <person name="Dalin E."/>
            <person name="Tice H."/>
            <person name="Pitluck S."/>
            <person name="Bruce D."/>
            <person name="Goodwin L."/>
            <person name="Thompson L.S."/>
            <person name="Brettin T."/>
            <person name="Detter J.C."/>
            <person name="Han C."/>
            <person name="Schmutz J."/>
            <person name="Larimer F."/>
            <person name="Land M."/>
            <person name="Hauser L."/>
            <person name="Kyrpides N."/>
            <person name="Kim E."/>
            <person name="Stephens C."/>
            <person name="Richardson P."/>
        </authorList>
    </citation>
    <scope>NUCLEOTIDE SEQUENCE [LARGE SCALE GENOMIC DNA]</scope>
    <source>
        <strain>K31</strain>
    </source>
</reference>
<gene>
    <name evidence="1" type="primary">rpsC</name>
    <name type="ordered locus">Caul_1620</name>
</gene>